<accession>A8G6E7</accession>
<organism>
    <name type="scientific">Prochlorococcus marinus (strain MIT 9215)</name>
    <dbReference type="NCBI Taxonomy" id="93060"/>
    <lineage>
        <taxon>Bacteria</taxon>
        <taxon>Bacillati</taxon>
        <taxon>Cyanobacteriota</taxon>
        <taxon>Cyanophyceae</taxon>
        <taxon>Synechococcales</taxon>
        <taxon>Prochlorococcaceae</taxon>
        <taxon>Prochlorococcus</taxon>
    </lineage>
</organism>
<proteinExistence type="inferred from homology"/>
<sequence>MEKKLSSENNQLSSEQILGLLPHRYPFALVDKVIEHIPGERAVAIKNVTINEPQFQGHFPERPLMPGVLIVESMAQVGGIIVTQMPDLPKGLFVFAGINNVKFRKPVLPGDQLIISCELLSIKRQRFGKVKGEAHVDGKLVCAGELMFSLVN</sequence>
<keyword id="KW-0963">Cytoplasm</keyword>
<keyword id="KW-0441">Lipid A biosynthesis</keyword>
<keyword id="KW-0444">Lipid biosynthesis</keyword>
<keyword id="KW-0443">Lipid metabolism</keyword>
<keyword id="KW-0456">Lyase</keyword>
<comment type="function">
    <text evidence="1">Involved in unsaturated fatty acids biosynthesis. Catalyzes the dehydration of short chain beta-hydroxyacyl-ACPs and long chain saturated and unsaturated beta-hydroxyacyl-ACPs.</text>
</comment>
<comment type="catalytic activity">
    <reaction evidence="1">
        <text>a (3R)-hydroxyacyl-[ACP] = a (2E)-enoyl-[ACP] + H2O</text>
        <dbReference type="Rhea" id="RHEA:13097"/>
        <dbReference type="Rhea" id="RHEA-COMP:9925"/>
        <dbReference type="Rhea" id="RHEA-COMP:9945"/>
        <dbReference type="ChEBI" id="CHEBI:15377"/>
        <dbReference type="ChEBI" id="CHEBI:78784"/>
        <dbReference type="ChEBI" id="CHEBI:78827"/>
        <dbReference type="EC" id="4.2.1.59"/>
    </reaction>
</comment>
<comment type="subcellular location">
    <subcellularLocation>
        <location evidence="1">Cytoplasm</location>
    </subcellularLocation>
</comment>
<comment type="similarity">
    <text evidence="1">Belongs to the thioester dehydratase family. FabZ subfamily.</text>
</comment>
<gene>
    <name evidence="1" type="primary">fabZ</name>
    <name type="ordered locus">P9215_15651</name>
</gene>
<dbReference type="EC" id="4.2.1.59" evidence="1"/>
<dbReference type="EMBL" id="CP000825">
    <property type="protein sequence ID" value="ABV51178.1"/>
    <property type="molecule type" value="Genomic_DNA"/>
</dbReference>
<dbReference type="RefSeq" id="WP_012008219.1">
    <property type="nucleotide sequence ID" value="NC_009840.1"/>
</dbReference>
<dbReference type="SMR" id="A8G6E7"/>
<dbReference type="STRING" id="93060.P9215_15651"/>
<dbReference type="KEGG" id="pmh:P9215_15651"/>
<dbReference type="eggNOG" id="COG0764">
    <property type="taxonomic scope" value="Bacteria"/>
</dbReference>
<dbReference type="HOGENOM" id="CLU_078912_1_1_3"/>
<dbReference type="OrthoDB" id="9772788at2"/>
<dbReference type="Proteomes" id="UP000002014">
    <property type="component" value="Chromosome"/>
</dbReference>
<dbReference type="GO" id="GO:0005737">
    <property type="term" value="C:cytoplasm"/>
    <property type="evidence" value="ECO:0007669"/>
    <property type="project" value="UniProtKB-SubCell"/>
</dbReference>
<dbReference type="GO" id="GO:0016020">
    <property type="term" value="C:membrane"/>
    <property type="evidence" value="ECO:0007669"/>
    <property type="project" value="GOC"/>
</dbReference>
<dbReference type="GO" id="GO:0019171">
    <property type="term" value="F:(3R)-hydroxyacyl-[acyl-carrier-protein] dehydratase activity"/>
    <property type="evidence" value="ECO:0007669"/>
    <property type="project" value="UniProtKB-EC"/>
</dbReference>
<dbReference type="GO" id="GO:0006633">
    <property type="term" value="P:fatty acid biosynthetic process"/>
    <property type="evidence" value="ECO:0007669"/>
    <property type="project" value="UniProtKB-UniRule"/>
</dbReference>
<dbReference type="GO" id="GO:0009245">
    <property type="term" value="P:lipid A biosynthetic process"/>
    <property type="evidence" value="ECO:0007669"/>
    <property type="project" value="UniProtKB-UniRule"/>
</dbReference>
<dbReference type="CDD" id="cd01288">
    <property type="entry name" value="FabZ"/>
    <property type="match status" value="1"/>
</dbReference>
<dbReference type="FunFam" id="3.10.129.10:FF:000001">
    <property type="entry name" value="3-hydroxyacyl-[acyl-carrier-protein] dehydratase FabZ"/>
    <property type="match status" value="1"/>
</dbReference>
<dbReference type="Gene3D" id="3.10.129.10">
    <property type="entry name" value="Hotdog Thioesterase"/>
    <property type="match status" value="1"/>
</dbReference>
<dbReference type="HAMAP" id="MF_00406">
    <property type="entry name" value="FabZ"/>
    <property type="match status" value="1"/>
</dbReference>
<dbReference type="InterPro" id="IPR013114">
    <property type="entry name" value="FabA_FabZ"/>
</dbReference>
<dbReference type="InterPro" id="IPR010084">
    <property type="entry name" value="FabZ"/>
</dbReference>
<dbReference type="InterPro" id="IPR029069">
    <property type="entry name" value="HotDog_dom_sf"/>
</dbReference>
<dbReference type="NCBIfam" id="TIGR01750">
    <property type="entry name" value="fabZ"/>
    <property type="match status" value="1"/>
</dbReference>
<dbReference type="NCBIfam" id="NF000582">
    <property type="entry name" value="PRK00006.1"/>
    <property type="match status" value="1"/>
</dbReference>
<dbReference type="PANTHER" id="PTHR30272">
    <property type="entry name" value="3-HYDROXYACYL-[ACYL-CARRIER-PROTEIN] DEHYDRATASE"/>
    <property type="match status" value="1"/>
</dbReference>
<dbReference type="PANTHER" id="PTHR30272:SF1">
    <property type="entry name" value="3-HYDROXYACYL-[ACYL-CARRIER-PROTEIN] DEHYDRATASE"/>
    <property type="match status" value="1"/>
</dbReference>
<dbReference type="Pfam" id="PF07977">
    <property type="entry name" value="FabA"/>
    <property type="match status" value="1"/>
</dbReference>
<dbReference type="SUPFAM" id="SSF54637">
    <property type="entry name" value="Thioesterase/thiol ester dehydrase-isomerase"/>
    <property type="match status" value="1"/>
</dbReference>
<name>FABZ_PROM2</name>
<evidence type="ECO:0000255" key="1">
    <source>
        <dbReference type="HAMAP-Rule" id="MF_00406"/>
    </source>
</evidence>
<reference key="1">
    <citation type="journal article" date="2007" name="PLoS Genet.">
        <title>Patterns and implications of gene gain and loss in the evolution of Prochlorococcus.</title>
        <authorList>
            <person name="Kettler G.C."/>
            <person name="Martiny A.C."/>
            <person name="Huang K."/>
            <person name="Zucker J."/>
            <person name="Coleman M.L."/>
            <person name="Rodrigue S."/>
            <person name="Chen F."/>
            <person name="Lapidus A."/>
            <person name="Ferriera S."/>
            <person name="Johnson J."/>
            <person name="Steglich C."/>
            <person name="Church G.M."/>
            <person name="Richardson P."/>
            <person name="Chisholm S.W."/>
        </authorList>
    </citation>
    <scope>NUCLEOTIDE SEQUENCE [LARGE SCALE GENOMIC DNA]</scope>
    <source>
        <strain>MIT 9215</strain>
    </source>
</reference>
<protein>
    <recommendedName>
        <fullName evidence="1">3-hydroxyacyl-[acyl-carrier-protein] dehydratase FabZ</fullName>
        <ecNumber evidence="1">4.2.1.59</ecNumber>
    </recommendedName>
    <alternativeName>
        <fullName evidence="1">(3R)-hydroxymyristoyl-[acyl-carrier-protein] dehydratase</fullName>
        <shortName evidence="1">(3R)-hydroxymyristoyl-ACP dehydrase</shortName>
    </alternativeName>
    <alternativeName>
        <fullName evidence="1">Beta-hydroxyacyl-ACP dehydratase</fullName>
    </alternativeName>
</protein>
<feature type="chain" id="PRO_1000060832" description="3-hydroxyacyl-[acyl-carrier-protein] dehydratase FabZ">
    <location>
        <begin position="1"/>
        <end position="152"/>
    </location>
</feature>
<feature type="active site" evidence="1">
    <location>
        <position position="58"/>
    </location>
</feature>